<keyword id="KW-0032">Aminotransferase</keyword>
<keyword id="KW-1185">Reference proteome</keyword>
<keyword id="KW-0808">Transferase</keyword>
<comment type="function">
    <text evidence="1">The glycine cleavage system catalyzes the degradation of glycine.</text>
</comment>
<comment type="catalytic activity">
    <reaction evidence="1">
        <text>N(6)-[(R)-S(8)-aminomethyldihydrolipoyl]-L-lysyl-[protein] + (6S)-5,6,7,8-tetrahydrofolate = N(6)-[(R)-dihydrolipoyl]-L-lysyl-[protein] + (6R)-5,10-methylene-5,6,7,8-tetrahydrofolate + NH4(+)</text>
        <dbReference type="Rhea" id="RHEA:16945"/>
        <dbReference type="Rhea" id="RHEA-COMP:10475"/>
        <dbReference type="Rhea" id="RHEA-COMP:10492"/>
        <dbReference type="ChEBI" id="CHEBI:15636"/>
        <dbReference type="ChEBI" id="CHEBI:28938"/>
        <dbReference type="ChEBI" id="CHEBI:57453"/>
        <dbReference type="ChEBI" id="CHEBI:83100"/>
        <dbReference type="ChEBI" id="CHEBI:83143"/>
        <dbReference type="EC" id="2.1.2.10"/>
    </reaction>
</comment>
<comment type="subunit">
    <text evidence="1">The glycine cleavage system is composed of four proteins: P, T, L and H.</text>
</comment>
<comment type="similarity">
    <text evidence="1">Belongs to the GcvT family.</text>
</comment>
<sequence>MGQRTLLYDLHLALGAKTVDFGGWDMPLHYGSQVEEHHQVRSDCGVFDVSHMTVIDVDGTDATVWLQRLLANDVARLDDPGKALYSPLLNEQGGVIDDLIVYRTETGYRLVTNAATRAKVLDWLQLQRAGFSVDFQVRPDLAILAIQGPRAREKVAALLSPARAALIRELRPFEGVADGDWFIARTGYTGEDGLEIIFPGDQAVAFFNDLVGAGIAPSGLGARDTLRLEAGMNLYGQDIDENHTPLTSNLGWSIAWEPAERNFIGRVGLLAEIEHGVQEKLVGLVLEERGVLRAHQVVRVAGIGEGEITSGSFSPTLSKSIALARVPMATGDRAEVEIRGKWYPVRVVKPTFVRHGKILI</sequence>
<feature type="chain" id="PRO_0000122587" description="Aminomethyltransferase">
    <location>
        <begin position="1"/>
        <end position="360"/>
    </location>
</feature>
<protein>
    <recommendedName>
        <fullName evidence="1">Aminomethyltransferase</fullName>
        <ecNumber evidence="1">2.1.2.10</ecNumber>
    </recommendedName>
    <alternativeName>
        <fullName evidence="1">Glycine cleavage system T protein</fullName>
    </alternativeName>
</protein>
<evidence type="ECO:0000255" key="1">
    <source>
        <dbReference type="HAMAP-Rule" id="MF_00259"/>
    </source>
</evidence>
<name>GCST_PSEPK</name>
<organism>
    <name type="scientific">Pseudomonas putida (strain ATCC 47054 / DSM 6125 / CFBP 8728 / NCIMB 11950 / KT2440)</name>
    <dbReference type="NCBI Taxonomy" id="160488"/>
    <lineage>
        <taxon>Bacteria</taxon>
        <taxon>Pseudomonadati</taxon>
        <taxon>Pseudomonadota</taxon>
        <taxon>Gammaproteobacteria</taxon>
        <taxon>Pseudomonadales</taxon>
        <taxon>Pseudomonadaceae</taxon>
        <taxon>Pseudomonas</taxon>
    </lineage>
</organism>
<proteinExistence type="inferred from homology"/>
<reference key="1">
    <citation type="journal article" date="2002" name="Environ. Microbiol.">
        <title>Complete genome sequence and comparative analysis of the metabolically versatile Pseudomonas putida KT2440.</title>
        <authorList>
            <person name="Nelson K.E."/>
            <person name="Weinel C."/>
            <person name="Paulsen I.T."/>
            <person name="Dodson R.J."/>
            <person name="Hilbert H."/>
            <person name="Martins dos Santos V.A.P."/>
            <person name="Fouts D.E."/>
            <person name="Gill S.R."/>
            <person name="Pop M."/>
            <person name="Holmes M."/>
            <person name="Brinkac L.M."/>
            <person name="Beanan M.J."/>
            <person name="DeBoy R.T."/>
            <person name="Daugherty S.C."/>
            <person name="Kolonay J.F."/>
            <person name="Madupu R."/>
            <person name="Nelson W.C."/>
            <person name="White O."/>
            <person name="Peterson J.D."/>
            <person name="Khouri H.M."/>
            <person name="Hance I."/>
            <person name="Chris Lee P."/>
            <person name="Holtzapple E.K."/>
            <person name="Scanlan D."/>
            <person name="Tran K."/>
            <person name="Moazzez A."/>
            <person name="Utterback T.R."/>
            <person name="Rizzo M."/>
            <person name="Lee K."/>
            <person name="Kosack D."/>
            <person name="Moestl D."/>
            <person name="Wedler H."/>
            <person name="Lauber J."/>
            <person name="Stjepandic D."/>
            <person name="Hoheisel J."/>
            <person name="Straetz M."/>
            <person name="Heim S."/>
            <person name="Kiewitz C."/>
            <person name="Eisen J.A."/>
            <person name="Timmis K.N."/>
            <person name="Duesterhoeft A."/>
            <person name="Tuemmler B."/>
            <person name="Fraser C.M."/>
        </authorList>
    </citation>
    <scope>NUCLEOTIDE SEQUENCE [LARGE SCALE GENOMIC DNA]</scope>
    <source>
        <strain>ATCC 47054 / DSM 6125 / CFBP 8728 / NCIMB 11950 / KT2440</strain>
    </source>
</reference>
<dbReference type="EC" id="2.1.2.10" evidence="1"/>
<dbReference type="EMBL" id="AE015451">
    <property type="protein sequence ID" value="AAN70759.1"/>
    <property type="molecule type" value="Genomic_DNA"/>
</dbReference>
<dbReference type="RefSeq" id="NP_747295.1">
    <property type="nucleotide sequence ID" value="NC_002947.4"/>
</dbReference>
<dbReference type="RefSeq" id="WP_010955719.1">
    <property type="nucleotide sequence ID" value="NZ_CP169744.1"/>
</dbReference>
<dbReference type="SMR" id="Q88CI7"/>
<dbReference type="STRING" id="160488.PP_5194"/>
<dbReference type="PaxDb" id="160488-PP_5194"/>
<dbReference type="GeneID" id="83682932"/>
<dbReference type="KEGG" id="ppu:PP_5194"/>
<dbReference type="PATRIC" id="fig|160488.4.peg.5542"/>
<dbReference type="eggNOG" id="COG0404">
    <property type="taxonomic scope" value="Bacteria"/>
</dbReference>
<dbReference type="HOGENOM" id="CLU_007884_10_2_6"/>
<dbReference type="OrthoDB" id="9774591at2"/>
<dbReference type="PhylomeDB" id="Q88CI7"/>
<dbReference type="BioCyc" id="PPUT160488:G1G01-5540-MONOMER"/>
<dbReference type="Proteomes" id="UP000000556">
    <property type="component" value="Chromosome"/>
</dbReference>
<dbReference type="GO" id="GO:0005829">
    <property type="term" value="C:cytosol"/>
    <property type="evidence" value="ECO:0007669"/>
    <property type="project" value="TreeGrafter"/>
</dbReference>
<dbReference type="GO" id="GO:0005960">
    <property type="term" value="C:glycine cleavage complex"/>
    <property type="evidence" value="ECO:0007669"/>
    <property type="project" value="InterPro"/>
</dbReference>
<dbReference type="GO" id="GO:0004047">
    <property type="term" value="F:aminomethyltransferase activity"/>
    <property type="evidence" value="ECO:0007669"/>
    <property type="project" value="UniProtKB-UniRule"/>
</dbReference>
<dbReference type="GO" id="GO:0008483">
    <property type="term" value="F:transaminase activity"/>
    <property type="evidence" value="ECO:0007669"/>
    <property type="project" value="UniProtKB-KW"/>
</dbReference>
<dbReference type="GO" id="GO:0019464">
    <property type="term" value="P:glycine decarboxylation via glycine cleavage system"/>
    <property type="evidence" value="ECO:0007669"/>
    <property type="project" value="UniProtKB-UniRule"/>
</dbReference>
<dbReference type="FunFam" id="2.40.30.110:FF:000001">
    <property type="entry name" value="Aminomethyltransferase"/>
    <property type="match status" value="1"/>
</dbReference>
<dbReference type="FunFam" id="3.30.70.1400:FF:000001">
    <property type="entry name" value="Aminomethyltransferase"/>
    <property type="match status" value="1"/>
</dbReference>
<dbReference type="Gene3D" id="2.40.30.110">
    <property type="entry name" value="Aminomethyltransferase beta-barrel domains"/>
    <property type="match status" value="1"/>
</dbReference>
<dbReference type="Gene3D" id="3.30.70.1400">
    <property type="entry name" value="Aminomethyltransferase beta-barrel domains"/>
    <property type="match status" value="1"/>
</dbReference>
<dbReference type="Gene3D" id="4.10.1250.10">
    <property type="entry name" value="Aminomethyltransferase fragment"/>
    <property type="match status" value="1"/>
</dbReference>
<dbReference type="Gene3D" id="3.30.1360.120">
    <property type="entry name" value="Probable tRNA modification gtpase trme, domain 1"/>
    <property type="match status" value="1"/>
</dbReference>
<dbReference type="HAMAP" id="MF_00259">
    <property type="entry name" value="GcvT"/>
    <property type="match status" value="1"/>
</dbReference>
<dbReference type="InterPro" id="IPR006223">
    <property type="entry name" value="GCS_T"/>
</dbReference>
<dbReference type="InterPro" id="IPR022903">
    <property type="entry name" value="GCS_T_bac"/>
</dbReference>
<dbReference type="InterPro" id="IPR013977">
    <property type="entry name" value="GCST_C"/>
</dbReference>
<dbReference type="InterPro" id="IPR006222">
    <property type="entry name" value="GCV_T_N"/>
</dbReference>
<dbReference type="InterPro" id="IPR028896">
    <property type="entry name" value="GcvT/YgfZ/DmdA"/>
</dbReference>
<dbReference type="InterPro" id="IPR029043">
    <property type="entry name" value="GcvT/YgfZ_C"/>
</dbReference>
<dbReference type="InterPro" id="IPR027266">
    <property type="entry name" value="TrmE/GcvT_dom1"/>
</dbReference>
<dbReference type="NCBIfam" id="TIGR00528">
    <property type="entry name" value="gcvT"/>
    <property type="match status" value="1"/>
</dbReference>
<dbReference type="NCBIfam" id="NF001567">
    <property type="entry name" value="PRK00389.1"/>
    <property type="match status" value="1"/>
</dbReference>
<dbReference type="PANTHER" id="PTHR43757">
    <property type="entry name" value="AMINOMETHYLTRANSFERASE"/>
    <property type="match status" value="1"/>
</dbReference>
<dbReference type="PANTHER" id="PTHR43757:SF2">
    <property type="entry name" value="AMINOMETHYLTRANSFERASE, MITOCHONDRIAL"/>
    <property type="match status" value="1"/>
</dbReference>
<dbReference type="Pfam" id="PF01571">
    <property type="entry name" value="GCV_T"/>
    <property type="match status" value="1"/>
</dbReference>
<dbReference type="Pfam" id="PF08669">
    <property type="entry name" value="GCV_T_C"/>
    <property type="match status" value="1"/>
</dbReference>
<dbReference type="PIRSF" id="PIRSF006487">
    <property type="entry name" value="GcvT"/>
    <property type="match status" value="1"/>
</dbReference>
<dbReference type="SUPFAM" id="SSF101790">
    <property type="entry name" value="Aminomethyltransferase beta-barrel domain"/>
    <property type="match status" value="1"/>
</dbReference>
<dbReference type="SUPFAM" id="SSF103025">
    <property type="entry name" value="Folate-binding domain"/>
    <property type="match status" value="1"/>
</dbReference>
<accession>Q88CI7</accession>
<gene>
    <name evidence="1" type="primary">gcvT</name>
    <name type="synonym">gcvT-2</name>
    <name type="ordered locus">PP_5194</name>
</gene>